<feature type="chain" id="PRO_1000007841" description="4-diphosphocytidyl-2-C-methyl-D-erythritol kinase">
    <location>
        <begin position="1"/>
        <end position="283"/>
    </location>
</feature>
<feature type="active site" evidence="1">
    <location>
        <position position="10"/>
    </location>
</feature>
<feature type="active site" evidence="1">
    <location>
        <position position="141"/>
    </location>
</feature>
<feature type="binding site" evidence="1">
    <location>
        <begin position="99"/>
        <end position="109"/>
    </location>
    <ligand>
        <name>ATP</name>
        <dbReference type="ChEBI" id="CHEBI:30616"/>
    </ligand>
</feature>
<reference key="1">
    <citation type="journal article" date="2007" name="J. Bacteriol.">
        <title>The genome sequence of avian pathogenic Escherichia coli strain O1:K1:H7 shares strong similarities with human extraintestinal pathogenic E. coli genomes.</title>
        <authorList>
            <person name="Johnson T.J."/>
            <person name="Kariyawasam S."/>
            <person name="Wannemuehler Y."/>
            <person name="Mangiamele P."/>
            <person name="Johnson S.J."/>
            <person name="Doetkott C."/>
            <person name="Skyberg J.A."/>
            <person name="Lynne A.M."/>
            <person name="Johnson J.R."/>
            <person name="Nolan L.K."/>
        </authorList>
    </citation>
    <scope>NUCLEOTIDE SEQUENCE [LARGE SCALE GENOMIC DNA]</scope>
</reference>
<protein>
    <recommendedName>
        <fullName evidence="1">4-diphosphocytidyl-2-C-methyl-D-erythritol kinase</fullName>
        <shortName evidence="1">CMK</shortName>
        <ecNumber evidence="1">2.7.1.148</ecNumber>
    </recommendedName>
    <alternativeName>
        <fullName evidence="1">4-(cytidine-5'-diphospho)-2-C-methyl-D-erythritol kinase</fullName>
    </alternativeName>
</protein>
<sequence length="283" mass="30943">MRTQWPSPAKLNLFLYITGQRADGYHTLQTLFQFLDYGDTISIELRDDGDIRLLTPVEGVEHEDNLIVRAARLLMKTAADSGRLSTGSGANISIDKRLPMGGGLGGGSSNAATVLVALNHLWQCGLSMDELAEMGLTLGADVPVFVRGHAAFAEGVGEILTPVDPPEKWYLVAHPGVSIPTPVIFKDPELPRNTPKRSIETLLKCEFSNDCEVIARKRFREVDAVLSWLLEYAPSRLTGTGACVFAEFDTESEARQVLEQAPEWLNGFVAKGVNLSPLHRAML</sequence>
<proteinExistence type="inferred from homology"/>
<evidence type="ECO:0000255" key="1">
    <source>
        <dbReference type="HAMAP-Rule" id="MF_00061"/>
    </source>
</evidence>
<gene>
    <name evidence="1" type="primary">ispE</name>
    <name type="ordered locus">Ecok1_11310</name>
    <name type="ORF">APECO1_324</name>
</gene>
<dbReference type="EC" id="2.7.1.148" evidence="1"/>
<dbReference type="EMBL" id="CP000468">
    <property type="protein sequence ID" value="ABJ00625.1"/>
    <property type="molecule type" value="Genomic_DNA"/>
</dbReference>
<dbReference type="RefSeq" id="WP_001260346.1">
    <property type="nucleotide sequence ID" value="NZ_CADILS010000001.1"/>
</dbReference>
<dbReference type="SMR" id="A1AAD5"/>
<dbReference type="KEGG" id="ecv:APECO1_324"/>
<dbReference type="HOGENOM" id="CLU_053057_3_0_6"/>
<dbReference type="UniPathway" id="UPA00056">
    <property type="reaction ID" value="UER00094"/>
</dbReference>
<dbReference type="Proteomes" id="UP000008216">
    <property type="component" value="Chromosome"/>
</dbReference>
<dbReference type="GO" id="GO:0050515">
    <property type="term" value="F:4-(cytidine 5'-diphospho)-2-C-methyl-D-erythritol kinase activity"/>
    <property type="evidence" value="ECO:0007669"/>
    <property type="project" value="UniProtKB-UniRule"/>
</dbReference>
<dbReference type="GO" id="GO:0005524">
    <property type="term" value="F:ATP binding"/>
    <property type="evidence" value="ECO:0007669"/>
    <property type="project" value="UniProtKB-UniRule"/>
</dbReference>
<dbReference type="GO" id="GO:0019288">
    <property type="term" value="P:isopentenyl diphosphate biosynthetic process, methylerythritol 4-phosphate pathway"/>
    <property type="evidence" value="ECO:0007669"/>
    <property type="project" value="UniProtKB-UniRule"/>
</dbReference>
<dbReference type="GO" id="GO:0016114">
    <property type="term" value="P:terpenoid biosynthetic process"/>
    <property type="evidence" value="ECO:0007669"/>
    <property type="project" value="InterPro"/>
</dbReference>
<dbReference type="FunFam" id="3.30.230.10:FF:000022">
    <property type="entry name" value="4-diphosphocytidyl-2-C-methyl-D-erythritol kinase"/>
    <property type="match status" value="1"/>
</dbReference>
<dbReference type="FunFam" id="3.30.70.890:FF:000004">
    <property type="entry name" value="4-diphosphocytidyl-2-C-methyl-D-erythritol kinase"/>
    <property type="match status" value="1"/>
</dbReference>
<dbReference type="Gene3D" id="3.30.230.10">
    <property type="match status" value="1"/>
</dbReference>
<dbReference type="Gene3D" id="3.30.70.890">
    <property type="entry name" value="GHMP kinase, C-terminal domain"/>
    <property type="match status" value="1"/>
</dbReference>
<dbReference type="HAMAP" id="MF_00061">
    <property type="entry name" value="IspE"/>
    <property type="match status" value="1"/>
</dbReference>
<dbReference type="InterPro" id="IPR013750">
    <property type="entry name" value="GHMP_kinase_C_dom"/>
</dbReference>
<dbReference type="InterPro" id="IPR036554">
    <property type="entry name" value="GHMP_kinase_C_sf"/>
</dbReference>
<dbReference type="InterPro" id="IPR006204">
    <property type="entry name" value="GHMP_kinase_N_dom"/>
</dbReference>
<dbReference type="InterPro" id="IPR004424">
    <property type="entry name" value="IspE"/>
</dbReference>
<dbReference type="InterPro" id="IPR020568">
    <property type="entry name" value="Ribosomal_Su5_D2-typ_SF"/>
</dbReference>
<dbReference type="InterPro" id="IPR014721">
    <property type="entry name" value="Ribsml_uS5_D2-typ_fold_subgr"/>
</dbReference>
<dbReference type="NCBIfam" id="TIGR00154">
    <property type="entry name" value="ispE"/>
    <property type="match status" value="1"/>
</dbReference>
<dbReference type="PANTHER" id="PTHR43527">
    <property type="entry name" value="4-DIPHOSPHOCYTIDYL-2-C-METHYL-D-ERYTHRITOL KINASE, CHLOROPLASTIC"/>
    <property type="match status" value="1"/>
</dbReference>
<dbReference type="PANTHER" id="PTHR43527:SF2">
    <property type="entry name" value="4-DIPHOSPHOCYTIDYL-2-C-METHYL-D-ERYTHRITOL KINASE, CHLOROPLASTIC"/>
    <property type="match status" value="1"/>
</dbReference>
<dbReference type="Pfam" id="PF08544">
    <property type="entry name" value="GHMP_kinases_C"/>
    <property type="match status" value="1"/>
</dbReference>
<dbReference type="Pfam" id="PF00288">
    <property type="entry name" value="GHMP_kinases_N"/>
    <property type="match status" value="1"/>
</dbReference>
<dbReference type="PIRSF" id="PIRSF010376">
    <property type="entry name" value="IspE"/>
    <property type="match status" value="1"/>
</dbReference>
<dbReference type="SUPFAM" id="SSF55060">
    <property type="entry name" value="GHMP Kinase, C-terminal domain"/>
    <property type="match status" value="1"/>
</dbReference>
<dbReference type="SUPFAM" id="SSF54211">
    <property type="entry name" value="Ribosomal protein S5 domain 2-like"/>
    <property type="match status" value="1"/>
</dbReference>
<name>ISPE_ECOK1</name>
<accession>A1AAD5</accession>
<organism>
    <name type="scientific">Escherichia coli O1:K1 / APEC</name>
    <dbReference type="NCBI Taxonomy" id="405955"/>
    <lineage>
        <taxon>Bacteria</taxon>
        <taxon>Pseudomonadati</taxon>
        <taxon>Pseudomonadota</taxon>
        <taxon>Gammaproteobacteria</taxon>
        <taxon>Enterobacterales</taxon>
        <taxon>Enterobacteriaceae</taxon>
        <taxon>Escherichia</taxon>
    </lineage>
</organism>
<comment type="function">
    <text evidence="1">Catalyzes the phosphorylation of the position 2 hydroxy group of 4-diphosphocytidyl-2C-methyl-D-erythritol.</text>
</comment>
<comment type="catalytic activity">
    <reaction evidence="1">
        <text>4-CDP-2-C-methyl-D-erythritol + ATP = 4-CDP-2-C-methyl-D-erythritol 2-phosphate + ADP + H(+)</text>
        <dbReference type="Rhea" id="RHEA:18437"/>
        <dbReference type="ChEBI" id="CHEBI:15378"/>
        <dbReference type="ChEBI" id="CHEBI:30616"/>
        <dbReference type="ChEBI" id="CHEBI:57823"/>
        <dbReference type="ChEBI" id="CHEBI:57919"/>
        <dbReference type="ChEBI" id="CHEBI:456216"/>
        <dbReference type="EC" id="2.7.1.148"/>
    </reaction>
</comment>
<comment type="pathway">
    <text evidence="1">Isoprenoid biosynthesis; isopentenyl diphosphate biosynthesis via DXP pathway; isopentenyl diphosphate from 1-deoxy-D-xylulose 5-phosphate: step 3/6.</text>
</comment>
<comment type="subunit">
    <text evidence="1">Homodimer.</text>
</comment>
<comment type="similarity">
    <text evidence="1">Belongs to the GHMP kinase family. IspE subfamily.</text>
</comment>
<keyword id="KW-0067">ATP-binding</keyword>
<keyword id="KW-0414">Isoprene biosynthesis</keyword>
<keyword id="KW-0418">Kinase</keyword>
<keyword id="KW-0547">Nucleotide-binding</keyword>
<keyword id="KW-1185">Reference proteome</keyword>
<keyword id="KW-0808">Transferase</keyword>